<organism>
    <name type="scientific">Danio rerio</name>
    <name type="common">Zebrafish</name>
    <name type="synonym">Brachydanio rerio</name>
    <dbReference type="NCBI Taxonomy" id="7955"/>
    <lineage>
        <taxon>Eukaryota</taxon>
        <taxon>Metazoa</taxon>
        <taxon>Chordata</taxon>
        <taxon>Craniata</taxon>
        <taxon>Vertebrata</taxon>
        <taxon>Euteleostomi</taxon>
        <taxon>Actinopterygii</taxon>
        <taxon>Neopterygii</taxon>
        <taxon>Teleostei</taxon>
        <taxon>Ostariophysi</taxon>
        <taxon>Cypriniformes</taxon>
        <taxon>Danionidae</taxon>
        <taxon>Danioninae</taxon>
        <taxon>Danio</taxon>
    </lineage>
</organism>
<feature type="chain" id="PRO_0000405822" description="DnaJ homolog subfamily C member 2">
    <location>
        <begin position="1"/>
        <end position="618"/>
    </location>
</feature>
<feature type="domain" description="J" evidence="2">
    <location>
        <begin position="85"/>
        <end position="158"/>
    </location>
</feature>
<feature type="domain" description="SANT 1" evidence="3">
    <location>
        <begin position="445"/>
        <end position="507"/>
    </location>
</feature>
<feature type="domain" description="SANT 2" evidence="3">
    <location>
        <begin position="548"/>
        <end position="603"/>
    </location>
</feature>
<feature type="region of interest" description="Disordered" evidence="4">
    <location>
        <begin position="281"/>
        <end position="315"/>
    </location>
</feature>
<feature type="region of interest" description="Disordered" evidence="4">
    <location>
        <begin position="330"/>
        <end position="349"/>
    </location>
</feature>
<feature type="region of interest" description="Disordered" evidence="4">
    <location>
        <begin position="419"/>
        <end position="448"/>
    </location>
</feature>
<feature type="compositionally biased region" description="Polar residues" evidence="4">
    <location>
        <begin position="428"/>
        <end position="448"/>
    </location>
</feature>
<keyword id="KW-0010">Activator</keyword>
<keyword id="KW-0143">Chaperone</keyword>
<keyword id="KW-0156">Chromatin regulator</keyword>
<keyword id="KW-0963">Cytoplasm</keyword>
<keyword id="KW-0539">Nucleus</keyword>
<keyword id="KW-1185">Reference proteome</keyword>
<keyword id="KW-0677">Repeat</keyword>
<keyword id="KW-0804">Transcription</keyword>
<keyword id="KW-0805">Transcription regulation</keyword>
<evidence type="ECO:0000250" key="1">
    <source>
        <dbReference type="UniProtKB" id="Q99543"/>
    </source>
</evidence>
<evidence type="ECO:0000255" key="2">
    <source>
        <dbReference type="PROSITE-ProRule" id="PRU00286"/>
    </source>
</evidence>
<evidence type="ECO:0000255" key="3">
    <source>
        <dbReference type="PROSITE-ProRule" id="PRU00624"/>
    </source>
</evidence>
<evidence type="ECO:0000256" key="4">
    <source>
        <dbReference type="SAM" id="MobiDB-lite"/>
    </source>
</evidence>
<evidence type="ECO:0000305" key="5"/>
<proteinExistence type="evidence at transcript level"/>
<sequence>MLTEALEGQLTVVYNTVAASVQVQVEPVGRWFEAFLKRRNRNVSASFQELEEEEELSEEEEDEELQLEEYPMLKTLDPKDWKNQDHYAVLGLAHVRYKATQKQIKAAHKAMVLKHHPDKRKAAGEQIVEGDNDYFTCITKAIEILSDPVKRRAFDSVDPTFDNAVPTKAEGKENFFEVFAPVFERNARWSVKKHFPSLGTMESSFEDVDNFYSFWYNFDSWREFSYLDEEEKEKAECRDERRWIEKQNRASRAQRKKEEMNRIRTLVDTAYNADPRIKKFKEEEKARKESEKKAKVEAKKREQEEKERARQQQEEAARLLKEQQEEAARQAAQQAKKEKEAQKKAIKKERQKLRMTCKSQNYFTDNEADSVRMMEEVEKLCDRLELISLQTLNEALSAGNKEQSKAALEKQVQEVNMQLQKEKDAELQAQQAARGSEHSSAAGGQNNRGWSEEDLQLLIKAVNLFPAGTNARWEVIANYMNQHSSSGVRRTAKDVINKAKTLQKLDPHQKDEINRKAFEKFKKEHSAVPPTVDNAMPSERFDAVGADSNAAAWTTEEQKLLEQALKTYPVSTAERWERISEAVPGRSKKDCMKRYKELVEMIKAKKAAQEQVAAKNKK</sequence>
<comment type="function">
    <text evidence="1">Acts both as a chaperone in the cytosol and as a chromatin regulator in the nucleus. When cytosolic, acts as a molecular chaperone: component of the ribosome-associated complex (RAC), a complex involved in folding or maintaining nascent polypeptides in a folding-competent state. When nuclear, mediates the switching from polycomb-repressed genes to an active state: specifically recruited at histone H2A ubiquitinated at 'Lys-119' (H2AK119ub), and promotes the displacement of the polycomb PRC1 complex from chromatin, thereby facilitating transcription activation (By similarity).</text>
</comment>
<comment type="subunit">
    <text evidence="1">Component of ribosome-associated complex (RAC).</text>
</comment>
<comment type="subcellular location">
    <subcellularLocation>
        <location evidence="3">Nucleus</location>
    </subcellularLocation>
    <subcellularLocation>
        <location evidence="1">Cytoplasm</location>
        <location evidence="1">Cytosol</location>
    </subcellularLocation>
</comment>
<comment type="sequence caution" evidence="5">
    <conflict type="miscellaneous discrepancy">
        <sequence resource="EMBL-CDS" id="AAH55125"/>
    </conflict>
    <text>Contaminating sequence. Potential poly-A sequence.</text>
</comment>
<reference key="1">
    <citation type="submission" date="2004-03" db="EMBL/GenBank/DDBJ databases">
        <authorList>
            <consortium name="NIH - Zebrafish Gene Collection (ZGC) project"/>
        </authorList>
    </citation>
    <scope>NUCLEOTIDE SEQUENCE [LARGE SCALE MRNA]</scope>
    <source>
        <strain>AB</strain>
        <tissue>Kidney</tissue>
    </source>
</reference>
<gene>
    <name type="primary">dnajc2</name>
    <name type="ORF">zgc:85671</name>
</gene>
<dbReference type="EMBL" id="BC055125">
    <property type="protein sequence ID" value="AAH55125.1"/>
    <property type="status" value="ALT_SEQ"/>
    <property type="molecule type" value="mRNA"/>
</dbReference>
<dbReference type="EMBL" id="BC067568">
    <property type="protein sequence ID" value="AAH67568.1"/>
    <property type="molecule type" value="mRNA"/>
</dbReference>
<dbReference type="RefSeq" id="NP_997976.1">
    <property type="nucleotide sequence ID" value="NM_212811.1"/>
</dbReference>
<dbReference type="SMR" id="Q6NWJ4"/>
<dbReference type="FunCoup" id="Q6NWJ4">
    <property type="interactions" value="2390"/>
</dbReference>
<dbReference type="STRING" id="7955.ENSDARP00000094239"/>
<dbReference type="PaxDb" id="7955-ENSDARP00000094239"/>
<dbReference type="Ensembl" id="ENSDART00000103463">
    <property type="protein sequence ID" value="ENSDARP00000094239"/>
    <property type="gene ID" value="ENSDARG00000070477"/>
</dbReference>
<dbReference type="GeneID" id="403080"/>
<dbReference type="KEGG" id="dre:403080"/>
<dbReference type="AGR" id="ZFIN:ZDB-GENE-040426-1912"/>
<dbReference type="CTD" id="27000"/>
<dbReference type="ZFIN" id="ZDB-GENE-040426-1912">
    <property type="gene designation" value="dnajc2"/>
</dbReference>
<dbReference type="eggNOG" id="KOG0724">
    <property type="taxonomic scope" value="Eukaryota"/>
</dbReference>
<dbReference type="HOGENOM" id="CLU_019916_0_0_1"/>
<dbReference type="InParanoid" id="Q6NWJ4"/>
<dbReference type="OMA" id="SFWYDFD"/>
<dbReference type="OrthoDB" id="1690618at2759"/>
<dbReference type="PhylomeDB" id="Q6NWJ4"/>
<dbReference type="TreeFam" id="TF105834"/>
<dbReference type="Reactome" id="R-DRE-3371453">
    <property type="pathway name" value="Regulation of HSF1-mediated heat shock response"/>
</dbReference>
<dbReference type="PRO" id="PR:Q6NWJ4"/>
<dbReference type="Proteomes" id="UP000000437">
    <property type="component" value="Chromosome 4"/>
</dbReference>
<dbReference type="Bgee" id="ENSDARG00000070477">
    <property type="expression patterns" value="Expressed in mature ovarian follicle and 27 other cell types or tissues"/>
</dbReference>
<dbReference type="ExpressionAtlas" id="Q6NWJ4">
    <property type="expression patterns" value="baseline"/>
</dbReference>
<dbReference type="GO" id="GO:0005829">
    <property type="term" value="C:cytosol"/>
    <property type="evidence" value="ECO:0000250"/>
    <property type="project" value="UniProtKB"/>
</dbReference>
<dbReference type="GO" id="GO:0005634">
    <property type="term" value="C:nucleus"/>
    <property type="evidence" value="ECO:0000250"/>
    <property type="project" value="UniProtKB"/>
</dbReference>
<dbReference type="GO" id="GO:0003682">
    <property type="term" value="F:chromatin binding"/>
    <property type="evidence" value="ECO:0000250"/>
    <property type="project" value="UniProtKB"/>
</dbReference>
<dbReference type="GO" id="GO:0042393">
    <property type="term" value="F:histone binding"/>
    <property type="evidence" value="ECO:0000250"/>
    <property type="project" value="UniProtKB"/>
</dbReference>
<dbReference type="GO" id="GO:0030544">
    <property type="term" value="F:Hsp70 protein binding"/>
    <property type="evidence" value="ECO:0000318"/>
    <property type="project" value="GO_Central"/>
</dbReference>
<dbReference type="GO" id="GO:0043022">
    <property type="term" value="F:ribosome binding"/>
    <property type="evidence" value="ECO:0000318"/>
    <property type="project" value="GO_Central"/>
</dbReference>
<dbReference type="GO" id="GO:0061649">
    <property type="term" value="F:ubiquitin-modified histone reader activity"/>
    <property type="evidence" value="ECO:0000250"/>
    <property type="project" value="UniProtKB"/>
</dbReference>
<dbReference type="GO" id="GO:0051083">
    <property type="term" value="P:'de novo' cotranslational protein folding"/>
    <property type="evidence" value="ECO:0000318"/>
    <property type="project" value="GO_Central"/>
</dbReference>
<dbReference type="GO" id="GO:0045893">
    <property type="term" value="P:positive regulation of DNA-templated transcription"/>
    <property type="evidence" value="ECO:0000250"/>
    <property type="project" value="UniProtKB"/>
</dbReference>
<dbReference type="GO" id="GO:0006450">
    <property type="term" value="P:regulation of translational fidelity"/>
    <property type="evidence" value="ECO:0007669"/>
    <property type="project" value="InterPro"/>
</dbReference>
<dbReference type="CDD" id="cd06257">
    <property type="entry name" value="DnaJ"/>
    <property type="match status" value="1"/>
</dbReference>
<dbReference type="CDD" id="cd00167">
    <property type="entry name" value="SANT"/>
    <property type="match status" value="2"/>
</dbReference>
<dbReference type="FunFam" id="1.10.10.60:FF:000180">
    <property type="entry name" value="DnaJ (Hsp40) homolog, subfamily C, member 2"/>
    <property type="match status" value="1"/>
</dbReference>
<dbReference type="Gene3D" id="1.10.287.110">
    <property type="entry name" value="DnaJ domain"/>
    <property type="match status" value="1"/>
</dbReference>
<dbReference type="Gene3D" id="1.10.10.60">
    <property type="entry name" value="Homeodomain-like"/>
    <property type="match status" value="2"/>
</dbReference>
<dbReference type="Gene3D" id="1.10.8.840">
    <property type="entry name" value="Ribosome-associated complex head domain"/>
    <property type="match status" value="1"/>
</dbReference>
<dbReference type="InterPro" id="IPR001623">
    <property type="entry name" value="DnaJ_domain"/>
</dbReference>
<dbReference type="InterPro" id="IPR009057">
    <property type="entry name" value="Homeodomain-like_sf"/>
</dbReference>
<dbReference type="InterPro" id="IPR036869">
    <property type="entry name" value="J_dom_sf"/>
</dbReference>
<dbReference type="InterPro" id="IPR017930">
    <property type="entry name" value="Myb_dom"/>
</dbReference>
<dbReference type="InterPro" id="IPR032003">
    <property type="entry name" value="RAC_head"/>
</dbReference>
<dbReference type="InterPro" id="IPR042569">
    <property type="entry name" value="RAC_head_sf"/>
</dbReference>
<dbReference type="InterPro" id="IPR001005">
    <property type="entry name" value="SANT/Myb"/>
</dbReference>
<dbReference type="InterPro" id="IPR017884">
    <property type="entry name" value="SANT_dom"/>
</dbReference>
<dbReference type="InterPro" id="IPR054076">
    <property type="entry name" value="ZUO1-like_ZHD"/>
</dbReference>
<dbReference type="InterPro" id="IPR044634">
    <property type="entry name" value="Zuotin/DnaJC2"/>
</dbReference>
<dbReference type="PANTHER" id="PTHR43999">
    <property type="entry name" value="DNAJ HOMOLOG SUBFAMILY C MEMBER 2"/>
    <property type="match status" value="1"/>
</dbReference>
<dbReference type="PANTHER" id="PTHR43999:SF1">
    <property type="entry name" value="DNAJ HOMOLOG SUBFAMILY C MEMBER 2"/>
    <property type="match status" value="1"/>
</dbReference>
<dbReference type="Pfam" id="PF00226">
    <property type="entry name" value="DnaJ"/>
    <property type="match status" value="1"/>
</dbReference>
<dbReference type="Pfam" id="PF00249">
    <property type="entry name" value="Myb_DNA-binding"/>
    <property type="match status" value="2"/>
</dbReference>
<dbReference type="Pfam" id="PF16717">
    <property type="entry name" value="RAC_head"/>
    <property type="match status" value="1"/>
</dbReference>
<dbReference type="Pfam" id="PF21884">
    <property type="entry name" value="ZUO1-like_ZHD"/>
    <property type="match status" value="1"/>
</dbReference>
<dbReference type="SMART" id="SM00271">
    <property type="entry name" value="DnaJ"/>
    <property type="match status" value="1"/>
</dbReference>
<dbReference type="SMART" id="SM00717">
    <property type="entry name" value="SANT"/>
    <property type="match status" value="2"/>
</dbReference>
<dbReference type="SUPFAM" id="SSF46565">
    <property type="entry name" value="Chaperone J-domain"/>
    <property type="match status" value="1"/>
</dbReference>
<dbReference type="SUPFAM" id="SSF46689">
    <property type="entry name" value="Homeodomain-like"/>
    <property type="match status" value="2"/>
</dbReference>
<dbReference type="PROSITE" id="PS50076">
    <property type="entry name" value="DNAJ_2"/>
    <property type="match status" value="1"/>
</dbReference>
<dbReference type="PROSITE" id="PS51293">
    <property type="entry name" value="SANT"/>
    <property type="match status" value="2"/>
</dbReference>
<name>DNJC2_DANRE</name>
<accession>Q6NWJ4</accession>
<accession>Q7SY51</accession>
<protein>
    <recommendedName>
        <fullName>DnaJ homolog subfamily C member 2</fullName>
    </recommendedName>
</protein>